<accession>O34953</accession>
<accession>Q795Q3</accession>
<evidence type="ECO:0000255" key="1"/>
<evidence type="ECO:0000269" key="2">
    <source>
    </source>
</evidence>
<evidence type="ECO:0000305" key="3"/>
<sequence length="325" mass="36435">MPDSGLLYKEWRQNKVALVITILVFILGNPLSILNMYLIYQGCVTGKENWVGPCVFSVDYLNSSFISLFWIWGVVLAVSQLGIERSKSFFDFTLSLPYTRGQIFHAKFLTGGMVIVVPQLIGYVLSVLLIMLLKPDQAVYFHNYSLGMIIVSMLAYSLVMAGGALTGNSFAQLLVSFTVAISPFLLISLPVINLEILFGGSIDFIHGPVPKWVQYFIPIIYVDSKWAENSPYYLVIPAIMTIIFYIIGYISFVKMSNERNGYFFLWKPLNRPVQIIVIIIGIMGFGYFGFTASESFAGYLIGMGTGAVIGFLISYFAIYKKMKLL</sequence>
<comment type="function">
    <text evidence="2">Part of the ABC transporter complex YtrBCDEF that plays a role in acetoin utilization during stationary phase and sporulation.</text>
</comment>
<comment type="subunit">
    <text evidence="3">The complex is composed of 2 ATP-binding proteins (YtrB and YtrE), 2 transmembrane proteins (YtrC and YtrD) and a solute-binding protein (YtrF).</text>
</comment>
<comment type="subcellular location">
    <subcellularLocation>
        <location evidence="3">Cell membrane</location>
        <topology evidence="3">Multi-pass membrane protein</topology>
    </subcellularLocation>
</comment>
<comment type="developmental stage">
    <text evidence="2">Expressed early in the stationary phase.</text>
</comment>
<comment type="induction">
    <text evidence="2">Negatively regulated by YtrA.</text>
</comment>
<comment type="similarity">
    <text evidence="3">Belongs to the ABC-5 integral membrane protein family.</text>
</comment>
<feature type="chain" id="PRO_0000360815" description="Probable ABC transporter permease YtrD">
    <location>
        <begin position="1"/>
        <end position="325"/>
    </location>
</feature>
<feature type="transmembrane region" description="Helical" evidence="1">
    <location>
        <begin position="16"/>
        <end position="36"/>
    </location>
</feature>
<feature type="transmembrane region" description="Helical" evidence="1">
    <location>
        <begin position="63"/>
        <end position="83"/>
    </location>
</feature>
<feature type="transmembrane region" description="Helical" evidence="1">
    <location>
        <begin position="113"/>
        <end position="133"/>
    </location>
</feature>
<feature type="transmembrane region" description="Helical" evidence="1">
    <location>
        <begin position="146"/>
        <end position="166"/>
    </location>
</feature>
<feature type="transmembrane region" description="Helical" evidence="1">
    <location>
        <begin position="179"/>
        <end position="199"/>
    </location>
</feature>
<feature type="transmembrane region" description="Helical" evidence="1">
    <location>
        <begin position="233"/>
        <end position="253"/>
    </location>
</feature>
<feature type="transmembrane region" description="Helical" evidence="1">
    <location>
        <begin position="272"/>
        <end position="292"/>
    </location>
</feature>
<feature type="transmembrane region" description="Helical" evidence="1">
    <location>
        <begin position="298"/>
        <end position="318"/>
    </location>
</feature>
<reference key="1">
    <citation type="journal article" date="1997" name="Microbiology">
        <title>Sequencing and functional annotation of the Bacillus subtilis genes in the 200 kb rrnB-dnaB region.</title>
        <authorList>
            <person name="Lapidus A."/>
            <person name="Galleron N."/>
            <person name="Sorokin A."/>
            <person name="Ehrlich S.D."/>
        </authorList>
    </citation>
    <scope>NUCLEOTIDE SEQUENCE [GENOMIC DNA]</scope>
    <source>
        <strain>168</strain>
    </source>
</reference>
<reference key="2">
    <citation type="journal article" date="1997" name="Nature">
        <title>The complete genome sequence of the Gram-positive bacterium Bacillus subtilis.</title>
        <authorList>
            <person name="Kunst F."/>
            <person name="Ogasawara N."/>
            <person name="Moszer I."/>
            <person name="Albertini A.M."/>
            <person name="Alloni G."/>
            <person name="Azevedo V."/>
            <person name="Bertero M.G."/>
            <person name="Bessieres P."/>
            <person name="Bolotin A."/>
            <person name="Borchert S."/>
            <person name="Borriss R."/>
            <person name="Boursier L."/>
            <person name="Brans A."/>
            <person name="Braun M."/>
            <person name="Brignell S.C."/>
            <person name="Bron S."/>
            <person name="Brouillet S."/>
            <person name="Bruschi C.V."/>
            <person name="Caldwell B."/>
            <person name="Capuano V."/>
            <person name="Carter N.M."/>
            <person name="Choi S.-K."/>
            <person name="Codani J.-J."/>
            <person name="Connerton I.F."/>
            <person name="Cummings N.J."/>
            <person name="Daniel R.A."/>
            <person name="Denizot F."/>
            <person name="Devine K.M."/>
            <person name="Duesterhoeft A."/>
            <person name="Ehrlich S.D."/>
            <person name="Emmerson P.T."/>
            <person name="Entian K.-D."/>
            <person name="Errington J."/>
            <person name="Fabret C."/>
            <person name="Ferrari E."/>
            <person name="Foulger D."/>
            <person name="Fritz C."/>
            <person name="Fujita M."/>
            <person name="Fujita Y."/>
            <person name="Fuma S."/>
            <person name="Galizzi A."/>
            <person name="Galleron N."/>
            <person name="Ghim S.-Y."/>
            <person name="Glaser P."/>
            <person name="Goffeau A."/>
            <person name="Golightly E.J."/>
            <person name="Grandi G."/>
            <person name="Guiseppi G."/>
            <person name="Guy B.J."/>
            <person name="Haga K."/>
            <person name="Haiech J."/>
            <person name="Harwood C.R."/>
            <person name="Henaut A."/>
            <person name="Hilbert H."/>
            <person name="Holsappel S."/>
            <person name="Hosono S."/>
            <person name="Hullo M.-F."/>
            <person name="Itaya M."/>
            <person name="Jones L.-M."/>
            <person name="Joris B."/>
            <person name="Karamata D."/>
            <person name="Kasahara Y."/>
            <person name="Klaerr-Blanchard M."/>
            <person name="Klein C."/>
            <person name="Kobayashi Y."/>
            <person name="Koetter P."/>
            <person name="Koningstein G."/>
            <person name="Krogh S."/>
            <person name="Kumano M."/>
            <person name="Kurita K."/>
            <person name="Lapidus A."/>
            <person name="Lardinois S."/>
            <person name="Lauber J."/>
            <person name="Lazarevic V."/>
            <person name="Lee S.-M."/>
            <person name="Levine A."/>
            <person name="Liu H."/>
            <person name="Masuda S."/>
            <person name="Mauel C."/>
            <person name="Medigue C."/>
            <person name="Medina N."/>
            <person name="Mellado R.P."/>
            <person name="Mizuno M."/>
            <person name="Moestl D."/>
            <person name="Nakai S."/>
            <person name="Noback M."/>
            <person name="Noone D."/>
            <person name="O'Reilly M."/>
            <person name="Ogawa K."/>
            <person name="Ogiwara A."/>
            <person name="Oudega B."/>
            <person name="Park S.-H."/>
            <person name="Parro V."/>
            <person name="Pohl T.M."/>
            <person name="Portetelle D."/>
            <person name="Porwollik S."/>
            <person name="Prescott A.M."/>
            <person name="Presecan E."/>
            <person name="Pujic P."/>
            <person name="Purnelle B."/>
            <person name="Rapoport G."/>
            <person name="Rey M."/>
            <person name="Reynolds S."/>
            <person name="Rieger M."/>
            <person name="Rivolta C."/>
            <person name="Rocha E."/>
            <person name="Roche B."/>
            <person name="Rose M."/>
            <person name="Sadaie Y."/>
            <person name="Sato T."/>
            <person name="Scanlan E."/>
            <person name="Schleich S."/>
            <person name="Schroeter R."/>
            <person name="Scoffone F."/>
            <person name="Sekiguchi J."/>
            <person name="Sekowska A."/>
            <person name="Seror S.J."/>
            <person name="Serror P."/>
            <person name="Shin B.-S."/>
            <person name="Soldo B."/>
            <person name="Sorokin A."/>
            <person name="Tacconi E."/>
            <person name="Takagi T."/>
            <person name="Takahashi H."/>
            <person name="Takemaru K."/>
            <person name="Takeuchi M."/>
            <person name="Tamakoshi A."/>
            <person name="Tanaka T."/>
            <person name="Terpstra P."/>
            <person name="Tognoni A."/>
            <person name="Tosato V."/>
            <person name="Uchiyama S."/>
            <person name="Vandenbol M."/>
            <person name="Vannier F."/>
            <person name="Vassarotti A."/>
            <person name="Viari A."/>
            <person name="Wambutt R."/>
            <person name="Wedler E."/>
            <person name="Wedler H."/>
            <person name="Weitzenegger T."/>
            <person name="Winters P."/>
            <person name="Wipat A."/>
            <person name="Yamamoto H."/>
            <person name="Yamane K."/>
            <person name="Yasumoto K."/>
            <person name="Yata K."/>
            <person name="Yoshida K."/>
            <person name="Yoshikawa H.-F."/>
            <person name="Zumstein E."/>
            <person name="Yoshikawa H."/>
            <person name="Danchin A."/>
        </authorList>
    </citation>
    <scope>NUCLEOTIDE SEQUENCE [LARGE SCALE GENOMIC DNA]</scope>
    <source>
        <strain>168</strain>
    </source>
</reference>
<reference key="3">
    <citation type="journal article" date="2000" name="J. Bacteriol.">
        <title>An operon for a putative ATP-binding cassette transport system involved in acetoin utilization of Bacillus subtilis.</title>
        <authorList>
            <person name="Yoshida K."/>
            <person name="Fujita Y."/>
            <person name="Ehrlich S.D."/>
        </authorList>
    </citation>
    <scope>FUNCTION</scope>
    <scope>DEVELOPMENTAL STAGE</scope>
    <scope>INDUCTION</scope>
</reference>
<protein>
    <recommendedName>
        <fullName>Probable ABC transporter permease YtrD</fullName>
    </recommendedName>
</protein>
<gene>
    <name type="primary">ytrD</name>
    <name type="ordered locus">BSU30430</name>
</gene>
<dbReference type="EMBL" id="AF008220">
    <property type="protein sequence ID" value="AAC00250.1"/>
    <property type="molecule type" value="Genomic_DNA"/>
</dbReference>
<dbReference type="EMBL" id="AL009126">
    <property type="protein sequence ID" value="CAB15021.1"/>
    <property type="molecule type" value="Genomic_DNA"/>
</dbReference>
<dbReference type="PIR" id="B70000">
    <property type="entry name" value="B70000"/>
</dbReference>
<dbReference type="RefSeq" id="NP_390921.1">
    <property type="nucleotide sequence ID" value="NC_000964.3"/>
</dbReference>
<dbReference type="RefSeq" id="WP_004398887.1">
    <property type="nucleotide sequence ID" value="NZ_OZ025638.1"/>
</dbReference>
<dbReference type="SMR" id="O34953"/>
<dbReference type="FunCoup" id="O34953">
    <property type="interactions" value="158"/>
</dbReference>
<dbReference type="STRING" id="224308.BSU30430"/>
<dbReference type="TCDB" id="3.A.1.153.1">
    <property type="family name" value="the atp-binding cassette (abc) superfamily"/>
</dbReference>
<dbReference type="PaxDb" id="224308-BSU30430"/>
<dbReference type="EnsemblBacteria" id="CAB15021">
    <property type="protein sequence ID" value="CAB15021"/>
    <property type="gene ID" value="BSU_30430"/>
</dbReference>
<dbReference type="GeneID" id="936438"/>
<dbReference type="KEGG" id="bsu:BSU30430"/>
<dbReference type="PATRIC" id="fig|224308.179.peg.3300"/>
<dbReference type="InParanoid" id="O34953"/>
<dbReference type="OrthoDB" id="2912723at2"/>
<dbReference type="BioCyc" id="BSUB:BSU30430-MONOMER"/>
<dbReference type="Proteomes" id="UP000001570">
    <property type="component" value="Chromosome"/>
</dbReference>
<dbReference type="GO" id="GO:0005886">
    <property type="term" value="C:plasma membrane"/>
    <property type="evidence" value="ECO:0007669"/>
    <property type="project" value="UniProtKB-SubCell"/>
</dbReference>
<dbReference type="InterPro" id="IPR053046">
    <property type="entry name" value="ABC-5_transporter"/>
</dbReference>
<dbReference type="InterPro" id="IPR023264">
    <property type="entry name" value="ABC_transptr_acetoin_YtrC/YtrD"/>
</dbReference>
<dbReference type="PANTHER" id="PTHR39177">
    <property type="entry name" value="ABC TRANSPORTER PERMEASE YTRC-RELATED"/>
    <property type="match status" value="1"/>
</dbReference>
<dbReference type="PANTHER" id="PTHR39177:SF1">
    <property type="entry name" value="ABC TRANSPORTER PERMEASE YTRC-RELATED"/>
    <property type="match status" value="1"/>
</dbReference>
<dbReference type="PRINTS" id="PR02026">
    <property type="entry name" value="YTRCYTRDABC"/>
</dbReference>
<organism>
    <name type="scientific">Bacillus subtilis (strain 168)</name>
    <dbReference type="NCBI Taxonomy" id="224308"/>
    <lineage>
        <taxon>Bacteria</taxon>
        <taxon>Bacillati</taxon>
        <taxon>Bacillota</taxon>
        <taxon>Bacilli</taxon>
        <taxon>Bacillales</taxon>
        <taxon>Bacillaceae</taxon>
        <taxon>Bacillus</taxon>
    </lineage>
</organism>
<name>YTRD_BACSU</name>
<proteinExistence type="evidence at transcript level"/>
<keyword id="KW-1003">Cell membrane</keyword>
<keyword id="KW-0472">Membrane</keyword>
<keyword id="KW-1185">Reference proteome</keyword>
<keyword id="KW-0812">Transmembrane</keyword>
<keyword id="KW-1133">Transmembrane helix</keyword>
<keyword id="KW-0813">Transport</keyword>